<keyword id="KW-0560">Oxidoreductase</keyword>
<protein>
    <recommendedName>
        <fullName evidence="1">Peptide methionine sulfoxide reductase MsrA 1</fullName>
        <shortName evidence="1">Protein-methionine-S-oxide reductase 1</shortName>
        <ecNumber evidence="1">1.8.4.11</ecNumber>
    </recommendedName>
    <alternativeName>
        <fullName evidence="1">Peptide-methionine (S)-S-oxide reductase 1</fullName>
        <shortName evidence="1">Peptide Met(O) reductase 1</shortName>
    </alternativeName>
</protein>
<sequence length="169" mass="19611">MNINTAYFAGGCFWCMTKPFDTFDGIEKVTSGYMGGHIENPTYEQVKSGTSGHLETVEIQYDVALFSYNKLLEIFFSVIDPLDTGGQYQDRGPQYQTAIFYTNDHQKELAETYIEQLKNTINADKAIATKILPASQFYKAEDYHQDFYKKNPERYAEEQKIRQEYKNKQ</sequence>
<evidence type="ECO:0000255" key="1">
    <source>
        <dbReference type="HAMAP-Rule" id="MF_01401"/>
    </source>
</evidence>
<organism>
    <name type="scientific">Staphylococcus aureus (strain MRSA252)</name>
    <dbReference type="NCBI Taxonomy" id="282458"/>
    <lineage>
        <taxon>Bacteria</taxon>
        <taxon>Bacillati</taxon>
        <taxon>Bacillota</taxon>
        <taxon>Bacilli</taxon>
        <taxon>Bacillales</taxon>
        <taxon>Staphylococcaceae</taxon>
        <taxon>Staphylococcus</taxon>
    </lineage>
</organism>
<proteinExistence type="inferred from homology"/>
<accession>Q6GH44</accession>
<reference key="1">
    <citation type="journal article" date="2004" name="Proc. Natl. Acad. Sci. U.S.A.">
        <title>Complete genomes of two clinical Staphylococcus aureus strains: evidence for the rapid evolution of virulence and drug resistance.</title>
        <authorList>
            <person name="Holden M.T.G."/>
            <person name="Feil E.J."/>
            <person name="Lindsay J.A."/>
            <person name="Peacock S.J."/>
            <person name="Day N.P.J."/>
            <person name="Enright M.C."/>
            <person name="Foster T.J."/>
            <person name="Moore C.E."/>
            <person name="Hurst L."/>
            <person name="Atkin R."/>
            <person name="Barron A."/>
            <person name="Bason N."/>
            <person name="Bentley S.D."/>
            <person name="Chillingworth C."/>
            <person name="Chillingworth T."/>
            <person name="Churcher C."/>
            <person name="Clark L."/>
            <person name="Corton C."/>
            <person name="Cronin A."/>
            <person name="Doggett J."/>
            <person name="Dowd L."/>
            <person name="Feltwell T."/>
            <person name="Hance Z."/>
            <person name="Harris B."/>
            <person name="Hauser H."/>
            <person name="Holroyd S."/>
            <person name="Jagels K."/>
            <person name="James K.D."/>
            <person name="Lennard N."/>
            <person name="Line A."/>
            <person name="Mayes R."/>
            <person name="Moule S."/>
            <person name="Mungall K."/>
            <person name="Ormond D."/>
            <person name="Quail M.A."/>
            <person name="Rabbinowitsch E."/>
            <person name="Rutherford K.M."/>
            <person name="Sanders M."/>
            <person name="Sharp S."/>
            <person name="Simmonds M."/>
            <person name="Stevens K."/>
            <person name="Whitehead S."/>
            <person name="Barrell B.G."/>
            <person name="Spratt B.G."/>
            <person name="Parkhill J."/>
        </authorList>
    </citation>
    <scope>NUCLEOTIDE SEQUENCE [LARGE SCALE GENOMIC DNA]</scope>
    <source>
        <strain>MRSA252</strain>
    </source>
</reference>
<comment type="function">
    <text evidence="1">Has an important function as a repair enzyme for proteins that have been inactivated by oxidation. Catalyzes the reversible oxidation-reduction of methionine sulfoxide in proteins to methionine.</text>
</comment>
<comment type="catalytic activity">
    <reaction evidence="1">
        <text>L-methionyl-[protein] + [thioredoxin]-disulfide + H2O = L-methionyl-(S)-S-oxide-[protein] + [thioredoxin]-dithiol</text>
        <dbReference type="Rhea" id="RHEA:14217"/>
        <dbReference type="Rhea" id="RHEA-COMP:10698"/>
        <dbReference type="Rhea" id="RHEA-COMP:10700"/>
        <dbReference type="Rhea" id="RHEA-COMP:12313"/>
        <dbReference type="Rhea" id="RHEA-COMP:12315"/>
        <dbReference type="ChEBI" id="CHEBI:15377"/>
        <dbReference type="ChEBI" id="CHEBI:16044"/>
        <dbReference type="ChEBI" id="CHEBI:29950"/>
        <dbReference type="ChEBI" id="CHEBI:44120"/>
        <dbReference type="ChEBI" id="CHEBI:50058"/>
        <dbReference type="EC" id="1.8.4.11"/>
    </reaction>
</comment>
<comment type="catalytic activity">
    <reaction evidence="1">
        <text>[thioredoxin]-disulfide + L-methionine + H2O = L-methionine (S)-S-oxide + [thioredoxin]-dithiol</text>
        <dbReference type="Rhea" id="RHEA:19993"/>
        <dbReference type="Rhea" id="RHEA-COMP:10698"/>
        <dbReference type="Rhea" id="RHEA-COMP:10700"/>
        <dbReference type="ChEBI" id="CHEBI:15377"/>
        <dbReference type="ChEBI" id="CHEBI:29950"/>
        <dbReference type="ChEBI" id="CHEBI:50058"/>
        <dbReference type="ChEBI" id="CHEBI:57844"/>
        <dbReference type="ChEBI" id="CHEBI:58772"/>
        <dbReference type="EC" id="1.8.4.11"/>
    </reaction>
</comment>
<comment type="similarity">
    <text evidence="1">Belongs to the MsrA Met sulfoxide reductase family.</text>
</comment>
<gene>
    <name evidence="1" type="primary">msrA1</name>
    <name type="ordered locus">SAR1373</name>
</gene>
<feature type="chain" id="PRO_0000138585" description="Peptide methionine sulfoxide reductase MsrA 1">
    <location>
        <begin position="1"/>
        <end position="169"/>
    </location>
</feature>
<feature type="active site" evidence="1">
    <location>
        <position position="12"/>
    </location>
</feature>
<dbReference type="EC" id="1.8.4.11" evidence="1"/>
<dbReference type="EMBL" id="BX571856">
    <property type="protein sequence ID" value="CAG40371.1"/>
    <property type="molecule type" value="Genomic_DNA"/>
</dbReference>
<dbReference type="SMR" id="Q6GH44"/>
<dbReference type="KEGG" id="sar:SAR1373"/>
<dbReference type="HOGENOM" id="CLU_031040_10_1_9"/>
<dbReference type="Proteomes" id="UP000000596">
    <property type="component" value="Chromosome"/>
</dbReference>
<dbReference type="GO" id="GO:0033744">
    <property type="term" value="F:L-methionine:thioredoxin-disulfide S-oxidoreductase activity"/>
    <property type="evidence" value="ECO:0007669"/>
    <property type="project" value="RHEA"/>
</dbReference>
<dbReference type="GO" id="GO:0008113">
    <property type="term" value="F:peptide-methionine (S)-S-oxide reductase activity"/>
    <property type="evidence" value="ECO:0007669"/>
    <property type="project" value="UniProtKB-UniRule"/>
</dbReference>
<dbReference type="GO" id="GO:0036211">
    <property type="term" value="P:protein modification process"/>
    <property type="evidence" value="ECO:0007669"/>
    <property type="project" value="UniProtKB-UniRule"/>
</dbReference>
<dbReference type="FunFam" id="3.30.1060.10:FF:000003">
    <property type="entry name" value="Peptide methionine sulfoxide reductase MsrA"/>
    <property type="match status" value="1"/>
</dbReference>
<dbReference type="Gene3D" id="3.30.1060.10">
    <property type="entry name" value="Peptide methionine sulphoxide reductase MsrA"/>
    <property type="match status" value="1"/>
</dbReference>
<dbReference type="HAMAP" id="MF_01401">
    <property type="entry name" value="MsrA"/>
    <property type="match status" value="1"/>
</dbReference>
<dbReference type="InterPro" id="IPR002569">
    <property type="entry name" value="Met_Sox_Rdtase_MsrA_dom"/>
</dbReference>
<dbReference type="InterPro" id="IPR036509">
    <property type="entry name" value="Met_Sox_Rdtase_MsrA_sf"/>
</dbReference>
<dbReference type="NCBIfam" id="TIGR00401">
    <property type="entry name" value="msrA"/>
    <property type="match status" value="1"/>
</dbReference>
<dbReference type="PANTHER" id="PTHR43774">
    <property type="entry name" value="PEPTIDE METHIONINE SULFOXIDE REDUCTASE"/>
    <property type="match status" value="1"/>
</dbReference>
<dbReference type="PANTHER" id="PTHR43774:SF1">
    <property type="entry name" value="PEPTIDE METHIONINE SULFOXIDE REDUCTASE MSRA 2"/>
    <property type="match status" value="1"/>
</dbReference>
<dbReference type="Pfam" id="PF01625">
    <property type="entry name" value="PMSR"/>
    <property type="match status" value="1"/>
</dbReference>
<dbReference type="SUPFAM" id="SSF55068">
    <property type="entry name" value="Peptide methionine sulfoxide reductase"/>
    <property type="match status" value="1"/>
</dbReference>
<name>MSRA1_STAAR</name>